<name>VP10_BPAPS</name>
<organism>
    <name type="scientific">Acyrthosiphon pisum secondary endosymbiont phage 1</name>
    <name type="common">Bacteriophage APSE-1</name>
    <dbReference type="NCBI Taxonomy" id="2682836"/>
    <lineage>
        <taxon>Viruses</taxon>
        <taxon>Duplodnaviria</taxon>
        <taxon>Heunggongvirae</taxon>
        <taxon>Uroviricota</taxon>
        <taxon>Caudoviricetes</taxon>
        <taxon>Sendosyvirus</taxon>
        <taxon>Sendosyvirus APSE1</taxon>
    </lineage>
</organism>
<gene>
    <name type="primary">10</name>
</gene>
<feature type="chain" id="PRO_0000077855" description="Putative protein p10">
    <location>
        <begin position="1"/>
        <end position="118"/>
    </location>
</feature>
<reference key="1">
    <citation type="journal article" date="1999" name="Virology">
        <title>Isolation and characterization of APSE-1, a bacteriophage infecting the secondary endosymbiont of acyrthosiphon pisum.</title>
        <authorList>
            <person name="van der Wilk F."/>
            <person name="Dullemans A.M."/>
            <person name="Verbeek M."/>
            <person name="van den Heuvel J.F.J.M."/>
        </authorList>
    </citation>
    <scope>NUCLEOTIDE SEQUENCE [LARGE SCALE GENOMIC DNA]</scope>
</reference>
<proteinExistence type="predicted"/>
<accession>Q9T1T8</accession>
<protein>
    <recommendedName>
        <fullName>Putative protein p10</fullName>
    </recommendedName>
</protein>
<sequence length="118" mass="13283">MLKIKLFSLVAIPFLFLSSYTSYAGDKYTITGAVENVSYNNSPTWPCYIAVDGEDDGKGGRRNYFHAANNTSICGLAERAKILNYRVKIYAEVDTGANIVYQIEFANTQSKYWDRASR</sequence>
<organismHost>
    <name type="scientific">Escherichia coli</name>
    <dbReference type="NCBI Taxonomy" id="562"/>
</organismHost>
<keyword id="KW-1185">Reference proteome</keyword>
<dbReference type="EMBL" id="AF157835">
    <property type="protein sequence ID" value="AAF03953.1"/>
    <property type="molecule type" value="Genomic_DNA"/>
</dbReference>
<dbReference type="RefSeq" id="NP_050971.1">
    <property type="nucleotide sequence ID" value="NC_000935.1"/>
</dbReference>
<dbReference type="KEGG" id="vg:1262304"/>
<dbReference type="Proteomes" id="UP000000853">
    <property type="component" value="Genome"/>
</dbReference>